<feature type="chain" id="PRO_0000234016" description="Zinc finger protein with KRAB and SCAN domains 2">
    <location>
        <begin position="1"/>
        <end position="967"/>
    </location>
</feature>
<feature type="domain" description="SCAN box" evidence="3">
    <location>
        <begin position="45"/>
        <end position="127"/>
    </location>
</feature>
<feature type="domain" description="KRAB" evidence="2">
    <location>
        <begin position="229"/>
        <end position="300"/>
    </location>
</feature>
<feature type="zinc finger region" description="C2H2-type 1" evidence="1">
    <location>
        <begin position="775"/>
        <end position="797"/>
    </location>
</feature>
<feature type="zinc finger region" description="C2H2-type 2" evidence="1">
    <location>
        <begin position="803"/>
        <end position="825"/>
    </location>
</feature>
<feature type="zinc finger region" description="C2H2-type 3" evidence="1">
    <location>
        <begin position="831"/>
        <end position="853"/>
    </location>
</feature>
<feature type="zinc finger region" description="C2H2-type 4" evidence="1">
    <location>
        <begin position="859"/>
        <end position="881"/>
    </location>
</feature>
<feature type="zinc finger region" description="C2H2-type 5" evidence="1">
    <location>
        <begin position="887"/>
        <end position="909"/>
    </location>
</feature>
<feature type="zinc finger region" description="C2H2-type 6" evidence="1">
    <location>
        <begin position="915"/>
        <end position="937"/>
    </location>
</feature>
<feature type="region of interest" description="Disordered" evidence="4">
    <location>
        <begin position="150"/>
        <end position="205"/>
    </location>
</feature>
<feature type="region of interest" description="Disordered" evidence="4">
    <location>
        <begin position="586"/>
        <end position="626"/>
    </location>
</feature>
<feature type="region of interest" description="Disordered" evidence="4">
    <location>
        <begin position="941"/>
        <end position="967"/>
    </location>
</feature>
<feature type="compositionally biased region" description="Basic and acidic residues" evidence="4">
    <location>
        <begin position="167"/>
        <end position="185"/>
    </location>
</feature>
<feature type="compositionally biased region" description="Low complexity" evidence="4">
    <location>
        <begin position="586"/>
        <end position="602"/>
    </location>
</feature>
<feature type="compositionally biased region" description="Basic and acidic residues" evidence="4">
    <location>
        <begin position="954"/>
        <end position="967"/>
    </location>
</feature>
<feature type="modified residue" description="Phosphoserine" evidence="8">
    <location>
        <position position="591"/>
    </location>
</feature>
<feature type="modified residue" description="Phosphoserine" evidence="8">
    <location>
        <position position="600"/>
    </location>
</feature>
<feature type="cross-link" description="Glycyl lysine isopeptide (Lys-Gly) (interchain with G-Cter in SUMO2)" evidence="9">
    <location>
        <position position="22"/>
    </location>
</feature>
<feature type="cross-link" description="Glycyl lysine isopeptide (Lys-Gly) (interchain with G-Cter in SUMO2)" evidence="9">
    <location>
        <position position="242"/>
    </location>
</feature>
<feature type="cross-link" description="Glycyl lysine isopeptide (Lys-Gly) (interchain with G-Cter in SUMO2)" evidence="9">
    <location>
        <position position="259"/>
    </location>
</feature>
<feature type="cross-link" description="Glycyl lysine isopeptide (Lys-Gly) (interchain with G-Cter in SUMO2)" evidence="9">
    <location>
        <position position="277"/>
    </location>
</feature>
<feature type="cross-link" description="Glycyl lysine isopeptide (Lys-Gly) (interchain with G-Cter in SUMO2)" evidence="9">
    <location>
        <position position="337"/>
    </location>
</feature>
<feature type="cross-link" description="Glycyl lysine isopeptide (Lys-Gly) (interchain with G-Cter in SUMO2)" evidence="9">
    <location>
        <position position="482"/>
    </location>
</feature>
<feature type="cross-link" description="Glycyl lysine isopeptide (Lys-Gly) (interchain with G-Cter in SUMO2)" evidence="9">
    <location>
        <position position="529"/>
    </location>
</feature>
<feature type="cross-link" description="Glycyl lysine isopeptide (Lys-Gly) (interchain with G-Cter in SUMO2)" evidence="9">
    <location>
        <position position="734"/>
    </location>
</feature>
<feature type="cross-link" description="Glycyl lysine isopeptide (Lys-Gly) (interchain with G-Cter in SUMO2)" evidence="9">
    <location>
        <position position="745"/>
    </location>
</feature>
<feature type="cross-link" description="Glycyl lysine isopeptide (Lys-Gly) (interchain with G-Cter in SUMO2)" evidence="9">
    <location>
        <position position="752"/>
    </location>
</feature>
<feature type="splice variant" id="VSP_018189" description="In isoform 2." evidence="6">
    <original>VHWGYEET</original>
    <variation>KNCALFLW</variation>
    <location>
        <begin position="498"/>
        <end position="505"/>
    </location>
</feature>
<feature type="splice variant" id="VSP_018190" description="In isoform 2." evidence="6">
    <location>
        <begin position="506"/>
        <end position="967"/>
    </location>
</feature>
<feature type="sequence variant" id="VAR_033597" description="In dbSNP:rs2112811.">
    <original>L</original>
    <variation>F</variation>
    <location>
        <position position="253"/>
    </location>
</feature>
<feature type="sequence variant" id="VAR_033598" description="In dbSNP:rs8059494." evidence="5">
    <original>E</original>
    <variation>D</variation>
    <location>
        <position position="615"/>
    </location>
</feature>
<feature type="sequence variant" id="VAR_057460" description="In dbSNP:rs7197424.">
    <original>P</original>
    <variation>S</variation>
    <location>
        <position position="947"/>
    </location>
</feature>
<feature type="sequence conflict" description="In Ref. 2; CAH56131." evidence="7" ref="2">
    <original>S</original>
    <variation>G</variation>
    <location>
        <position position="667"/>
    </location>
</feature>
<evidence type="ECO:0000255" key="1">
    <source>
        <dbReference type="PROSITE-ProRule" id="PRU00042"/>
    </source>
</evidence>
<evidence type="ECO:0000255" key="2">
    <source>
        <dbReference type="PROSITE-ProRule" id="PRU00119"/>
    </source>
</evidence>
<evidence type="ECO:0000255" key="3">
    <source>
        <dbReference type="PROSITE-ProRule" id="PRU00187"/>
    </source>
</evidence>
<evidence type="ECO:0000256" key="4">
    <source>
        <dbReference type="SAM" id="MobiDB-lite"/>
    </source>
</evidence>
<evidence type="ECO:0000269" key="5">
    <source>
    </source>
</evidence>
<evidence type="ECO:0000303" key="6">
    <source>
    </source>
</evidence>
<evidence type="ECO:0000305" key="7"/>
<evidence type="ECO:0007744" key="8">
    <source>
    </source>
</evidence>
<evidence type="ECO:0007744" key="9">
    <source>
    </source>
</evidence>
<proteinExistence type="evidence at protein level"/>
<dbReference type="EMBL" id="AK131342">
    <property type="protein sequence ID" value="BAD18498.1"/>
    <property type="molecule type" value="mRNA"/>
</dbReference>
<dbReference type="EMBL" id="BX648785">
    <property type="protein sequence ID" value="CAH56131.1"/>
    <property type="molecule type" value="mRNA"/>
</dbReference>
<dbReference type="EMBL" id="AC008741">
    <property type="status" value="NOT_ANNOTATED_CDS"/>
    <property type="molecule type" value="Genomic_DNA"/>
</dbReference>
<dbReference type="EMBL" id="BC130007">
    <property type="protein sequence ID" value="AAI30008.1"/>
    <property type="molecule type" value="mRNA"/>
</dbReference>
<dbReference type="EMBL" id="BC151139">
    <property type="protein sequence ID" value="AAI51140.1"/>
    <property type="molecule type" value="mRNA"/>
</dbReference>
<dbReference type="CCDS" id="CCDS32410.1">
    <molecule id="Q63HK3-1"/>
</dbReference>
<dbReference type="RefSeq" id="NP_001012999.3">
    <molecule id="Q63HK3-1"/>
    <property type="nucleotide sequence ID" value="NM_001012981.5"/>
</dbReference>
<dbReference type="SMR" id="Q63HK3"/>
<dbReference type="BioGRID" id="131170">
    <property type="interactions" value="8"/>
</dbReference>
<dbReference type="FunCoup" id="Q63HK3">
    <property type="interactions" value="58"/>
</dbReference>
<dbReference type="IntAct" id="Q63HK3">
    <property type="interactions" value="5"/>
</dbReference>
<dbReference type="STRING" id="9606.ENSP00000331626"/>
<dbReference type="GlyGen" id="Q63HK3">
    <property type="glycosylation" value="2 sites, 1 O-linked glycan (1 site)"/>
</dbReference>
<dbReference type="iPTMnet" id="Q63HK3"/>
<dbReference type="PhosphoSitePlus" id="Q63HK3"/>
<dbReference type="BioMuta" id="ZKSCAN2"/>
<dbReference type="DMDM" id="296453036"/>
<dbReference type="jPOST" id="Q63HK3"/>
<dbReference type="MassIVE" id="Q63HK3"/>
<dbReference type="PaxDb" id="9606-ENSP00000331626"/>
<dbReference type="PeptideAtlas" id="Q63HK3"/>
<dbReference type="ProteomicsDB" id="65876">
    <molecule id="Q63HK3-1"/>
</dbReference>
<dbReference type="ProteomicsDB" id="65877">
    <molecule id="Q63HK3-2"/>
</dbReference>
<dbReference type="ABCD" id="Q63HK3">
    <property type="antibodies" value="5 sequenced antibodies"/>
</dbReference>
<dbReference type="Antibodypedia" id="59128">
    <property type="antibodies" value="51 antibodies from 12 providers"/>
</dbReference>
<dbReference type="DNASU" id="342357"/>
<dbReference type="Ensembl" id="ENST00000328086.12">
    <molecule id="Q63HK3-1"/>
    <property type="protein sequence ID" value="ENSP00000331626.7"/>
    <property type="gene ID" value="ENSG00000155592.16"/>
</dbReference>
<dbReference type="GeneID" id="342357"/>
<dbReference type="KEGG" id="hsa:342357"/>
<dbReference type="MANE-Select" id="ENST00000328086.12">
    <property type="protein sequence ID" value="ENSP00000331626.7"/>
    <property type="RefSeq nucleotide sequence ID" value="NM_001012981.5"/>
    <property type="RefSeq protein sequence ID" value="NP_001012999.3"/>
</dbReference>
<dbReference type="UCSC" id="uc002dod.5">
    <molecule id="Q63HK3-1"/>
    <property type="organism name" value="human"/>
</dbReference>
<dbReference type="AGR" id="HGNC:25677"/>
<dbReference type="CTD" id="342357"/>
<dbReference type="GeneCards" id="ZKSCAN2"/>
<dbReference type="HGNC" id="HGNC:25677">
    <property type="gene designation" value="ZKSCAN2"/>
</dbReference>
<dbReference type="HPA" id="ENSG00000155592">
    <property type="expression patterns" value="Low tissue specificity"/>
</dbReference>
<dbReference type="neXtProt" id="NX_Q63HK3"/>
<dbReference type="PharmGKB" id="PA162409748"/>
<dbReference type="VEuPathDB" id="HostDB:ENSG00000155592"/>
<dbReference type="eggNOG" id="KOG1721">
    <property type="taxonomic scope" value="Eukaryota"/>
</dbReference>
<dbReference type="GeneTree" id="ENSGT00940000161884"/>
<dbReference type="HOGENOM" id="CLU_002678_88_0_1"/>
<dbReference type="InParanoid" id="Q63HK3"/>
<dbReference type="OMA" id="KHREVHV"/>
<dbReference type="OrthoDB" id="6077919at2759"/>
<dbReference type="PAN-GO" id="Q63HK3">
    <property type="GO annotations" value="3 GO annotations based on evolutionary models"/>
</dbReference>
<dbReference type="PhylomeDB" id="Q63HK3"/>
<dbReference type="TreeFam" id="TF336839"/>
<dbReference type="PathwayCommons" id="Q63HK3"/>
<dbReference type="BioGRID-ORCS" id="342357">
    <property type="hits" value="16 hits in 1186 CRISPR screens"/>
</dbReference>
<dbReference type="GenomeRNAi" id="342357"/>
<dbReference type="Pharos" id="Q63HK3">
    <property type="development level" value="Tdark"/>
</dbReference>
<dbReference type="PRO" id="PR:Q63HK3"/>
<dbReference type="Proteomes" id="UP000005640">
    <property type="component" value="Chromosome 16"/>
</dbReference>
<dbReference type="RNAct" id="Q63HK3">
    <property type="molecule type" value="protein"/>
</dbReference>
<dbReference type="Bgee" id="ENSG00000155592">
    <property type="expression patterns" value="Expressed in cortical plate and 150 other cell types or tissues"/>
</dbReference>
<dbReference type="ExpressionAtlas" id="Q63HK3">
    <property type="expression patterns" value="baseline and differential"/>
</dbReference>
<dbReference type="GO" id="GO:0005634">
    <property type="term" value="C:nucleus"/>
    <property type="evidence" value="ECO:0007669"/>
    <property type="project" value="UniProtKB-SubCell"/>
</dbReference>
<dbReference type="GO" id="GO:0000981">
    <property type="term" value="F:DNA-binding transcription factor activity, RNA polymerase II-specific"/>
    <property type="evidence" value="ECO:0000318"/>
    <property type="project" value="GO_Central"/>
</dbReference>
<dbReference type="GO" id="GO:0000978">
    <property type="term" value="F:RNA polymerase II cis-regulatory region sequence-specific DNA binding"/>
    <property type="evidence" value="ECO:0000318"/>
    <property type="project" value="GO_Central"/>
</dbReference>
<dbReference type="GO" id="GO:0008270">
    <property type="term" value="F:zinc ion binding"/>
    <property type="evidence" value="ECO:0007669"/>
    <property type="project" value="UniProtKB-KW"/>
</dbReference>
<dbReference type="GO" id="GO:0006357">
    <property type="term" value="P:regulation of transcription by RNA polymerase II"/>
    <property type="evidence" value="ECO:0000318"/>
    <property type="project" value="GO_Central"/>
</dbReference>
<dbReference type="CDD" id="cd07765">
    <property type="entry name" value="KRAB_A-box"/>
    <property type="match status" value="1"/>
</dbReference>
<dbReference type="CDD" id="cd07936">
    <property type="entry name" value="SCAN"/>
    <property type="match status" value="1"/>
</dbReference>
<dbReference type="FunFam" id="1.10.10.60:FF:000032">
    <property type="entry name" value="Zinc finger and SCAN domain-containing 20"/>
    <property type="match status" value="2"/>
</dbReference>
<dbReference type="FunFam" id="3.30.160.60:FF:000355">
    <property type="entry name" value="zinc finger and SCAN domain-containing protein 20 isoform X1"/>
    <property type="match status" value="1"/>
</dbReference>
<dbReference type="FunFam" id="3.30.160.60:FF:000557">
    <property type="entry name" value="zinc finger and SCAN domain-containing protein 29"/>
    <property type="match status" value="1"/>
</dbReference>
<dbReference type="FunFam" id="3.30.160.60:FF:000258">
    <property type="entry name" value="zinc finger and SCAN domain-containing protein 29 isoform X2"/>
    <property type="match status" value="1"/>
</dbReference>
<dbReference type="FunFam" id="3.30.160.60:FF:000365">
    <property type="entry name" value="zinc finger protein 197 isoform X1"/>
    <property type="match status" value="1"/>
</dbReference>
<dbReference type="FunFam" id="3.30.160.60:FF:000358">
    <property type="entry name" value="zinc finger protein 24"/>
    <property type="match status" value="1"/>
</dbReference>
<dbReference type="FunFam" id="1.10.4020.10:FF:000001">
    <property type="entry name" value="zinc finger protein 263 isoform X1"/>
    <property type="match status" value="1"/>
</dbReference>
<dbReference type="FunFam" id="3.30.160.60:FF:002090">
    <property type="entry name" value="Zinc finger protein 473"/>
    <property type="match status" value="1"/>
</dbReference>
<dbReference type="Gene3D" id="6.10.140.140">
    <property type="match status" value="1"/>
</dbReference>
<dbReference type="Gene3D" id="3.30.160.60">
    <property type="entry name" value="Classic Zinc Finger"/>
    <property type="match status" value="6"/>
</dbReference>
<dbReference type="Gene3D" id="1.10.4020.10">
    <property type="entry name" value="DNA breaking-rejoining enzymes"/>
    <property type="match status" value="1"/>
</dbReference>
<dbReference type="Gene3D" id="1.10.10.60">
    <property type="entry name" value="Homeodomain-like"/>
    <property type="match status" value="2"/>
</dbReference>
<dbReference type="InterPro" id="IPR001909">
    <property type="entry name" value="KRAB"/>
</dbReference>
<dbReference type="InterPro" id="IPR036051">
    <property type="entry name" value="KRAB_dom_sf"/>
</dbReference>
<dbReference type="InterPro" id="IPR044822">
    <property type="entry name" value="Myb_DNA-bind_4"/>
</dbReference>
<dbReference type="InterPro" id="IPR038765">
    <property type="entry name" value="Papain-like_cys_pep_sf"/>
</dbReference>
<dbReference type="InterPro" id="IPR003309">
    <property type="entry name" value="SCAN_dom"/>
</dbReference>
<dbReference type="InterPro" id="IPR038269">
    <property type="entry name" value="SCAN_sf"/>
</dbReference>
<dbReference type="InterPro" id="IPR036236">
    <property type="entry name" value="Znf_C2H2_sf"/>
</dbReference>
<dbReference type="InterPro" id="IPR013087">
    <property type="entry name" value="Znf_C2H2_type"/>
</dbReference>
<dbReference type="PANTHER" id="PTHR23235">
    <property type="entry name" value="KRUEPPEL-LIKE TRANSCRIPTION FACTOR"/>
    <property type="match status" value="1"/>
</dbReference>
<dbReference type="PANTHER" id="PTHR23235:SF152">
    <property type="entry name" value="SI:DKEY-210J14.3"/>
    <property type="match status" value="1"/>
</dbReference>
<dbReference type="Pfam" id="PF01352">
    <property type="entry name" value="KRAB"/>
    <property type="match status" value="1"/>
</dbReference>
<dbReference type="Pfam" id="PF13837">
    <property type="entry name" value="Myb_DNA-bind_4"/>
    <property type="match status" value="2"/>
</dbReference>
<dbReference type="Pfam" id="PF02023">
    <property type="entry name" value="SCAN"/>
    <property type="match status" value="1"/>
</dbReference>
<dbReference type="Pfam" id="PF00096">
    <property type="entry name" value="zf-C2H2"/>
    <property type="match status" value="5"/>
</dbReference>
<dbReference type="SMART" id="SM00349">
    <property type="entry name" value="KRAB"/>
    <property type="match status" value="1"/>
</dbReference>
<dbReference type="SMART" id="SM00431">
    <property type="entry name" value="SCAN"/>
    <property type="match status" value="1"/>
</dbReference>
<dbReference type="SMART" id="SM00355">
    <property type="entry name" value="ZnF_C2H2"/>
    <property type="match status" value="6"/>
</dbReference>
<dbReference type="SUPFAM" id="SSF57667">
    <property type="entry name" value="beta-beta-alpha zinc fingers"/>
    <property type="match status" value="3"/>
</dbReference>
<dbReference type="SUPFAM" id="SSF54001">
    <property type="entry name" value="Cysteine proteinases"/>
    <property type="match status" value="1"/>
</dbReference>
<dbReference type="SUPFAM" id="SSF109640">
    <property type="entry name" value="KRAB domain (Kruppel-associated box)"/>
    <property type="match status" value="1"/>
</dbReference>
<dbReference type="SUPFAM" id="SSF47353">
    <property type="entry name" value="Retrovirus capsid dimerization domain-like"/>
    <property type="match status" value="1"/>
</dbReference>
<dbReference type="PROSITE" id="PS50805">
    <property type="entry name" value="KRAB"/>
    <property type="match status" value="1"/>
</dbReference>
<dbReference type="PROSITE" id="PS50804">
    <property type="entry name" value="SCAN_BOX"/>
    <property type="match status" value="1"/>
</dbReference>
<dbReference type="PROSITE" id="PS00028">
    <property type="entry name" value="ZINC_FINGER_C2H2_1"/>
    <property type="match status" value="6"/>
</dbReference>
<dbReference type="PROSITE" id="PS50157">
    <property type="entry name" value="ZINC_FINGER_C2H2_2"/>
    <property type="match status" value="6"/>
</dbReference>
<keyword id="KW-0025">Alternative splicing</keyword>
<keyword id="KW-0238">DNA-binding</keyword>
<keyword id="KW-1017">Isopeptide bond</keyword>
<keyword id="KW-0479">Metal-binding</keyword>
<keyword id="KW-0539">Nucleus</keyword>
<keyword id="KW-0597">Phosphoprotein</keyword>
<keyword id="KW-1267">Proteomics identification</keyword>
<keyword id="KW-1185">Reference proteome</keyword>
<keyword id="KW-0677">Repeat</keyword>
<keyword id="KW-0804">Transcription</keyword>
<keyword id="KW-0805">Transcription regulation</keyword>
<keyword id="KW-0832">Ubl conjugation</keyword>
<keyword id="KW-0862">Zinc</keyword>
<keyword id="KW-0863">Zinc-finger</keyword>
<reference key="1">
    <citation type="journal article" date="2004" name="Nat. Genet.">
        <title>Complete sequencing and characterization of 21,243 full-length human cDNAs.</title>
        <authorList>
            <person name="Ota T."/>
            <person name="Suzuki Y."/>
            <person name="Nishikawa T."/>
            <person name="Otsuki T."/>
            <person name="Sugiyama T."/>
            <person name="Irie R."/>
            <person name="Wakamatsu A."/>
            <person name="Hayashi K."/>
            <person name="Sato H."/>
            <person name="Nagai K."/>
            <person name="Kimura K."/>
            <person name="Makita H."/>
            <person name="Sekine M."/>
            <person name="Obayashi M."/>
            <person name="Nishi T."/>
            <person name="Shibahara T."/>
            <person name="Tanaka T."/>
            <person name="Ishii S."/>
            <person name="Yamamoto J."/>
            <person name="Saito K."/>
            <person name="Kawai Y."/>
            <person name="Isono Y."/>
            <person name="Nakamura Y."/>
            <person name="Nagahari K."/>
            <person name="Murakami K."/>
            <person name="Yasuda T."/>
            <person name="Iwayanagi T."/>
            <person name="Wagatsuma M."/>
            <person name="Shiratori A."/>
            <person name="Sudo H."/>
            <person name="Hosoiri T."/>
            <person name="Kaku Y."/>
            <person name="Kodaira H."/>
            <person name="Kondo H."/>
            <person name="Sugawara M."/>
            <person name="Takahashi M."/>
            <person name="Kanda K."/>
            <person name="Yokoi T."/>
            <person name="Furuya T."/>
            <person name="Kikkawa E."/>
            <person name="Omura Y."/>
            <person name="Abe K."/>
            <person name="Kamihara K."/>
            <person name="Katsuta N."/>
            <person name="Sato K."/>
            <person name="Tanikawa M."/>
            <person name="Yamazaki M."/>
            <person name="Ninomiya K."/>
            <person name="Ishibashi T."/>
            <person name="Yamashita H."/>
            <person name="Murakawa K."/>
            <person name="Fujimori K."/>
            <person name="Tanai H."/>
            <person name="Kimata M."/>
            <person name="Watanabe M."/>
            <person name="Hiraoka S."/>
            <person name="Chiba Y."/>
            <person name="Ishida S."/>
            <person name="Ono Y."/>
            <person name="Takiguchi S."/>
            <person name="Watanabe S."/>
            <person name="Yosida M."/>
            <person name="Hotuta T."/>
            <person name="Kusano J."/>
            <person name="Kanehori K."/>
            <person name="Takahashi-Fujii A."/>
            <person name="Hara H."/>
            <person name="Tanase T.-O."/>
            <person name="Nomura Y."/>
            <person name="Togiya S."/>
            <person name="Komai F."/>
            <person name="Hara R."/>
            <person name="Takeuchi K."/>
            <person name="Arita M."/>
            <person name="Imose N."/>
            <person name="Musashino K."/>
            <person name="Yuuki H."/>
            <person name="Oshima A."/>
            <person name="Sasaki N."/>
            <person name="Aotsuka S."/>
            <person name="Yoshikawa Y."/>
            <person name="Matsunawa H."/>
            <person name="Ichihara T."/>
            <person name="Shiohata N."/>
            <person name="Sano S."/>
            <person name="Moriya S."/>
            <person name="Momiyama H."/>
            <person name="Satoh N."/>
            <person name="Takami S."/>
            <person name="Terashima Y."/>
            <person name="Suzuki O."/>
            <person name="Nakagawa S."/>
            <person name="Senoh A."/>
            <person name="Mizoguchi H."/>
            <person name="Goto Y."/>
            <person name="Shimizu F."/>
            <person name="Wakebe H."/>
            <person name="Hishigaki H."/>
            <person name="Watanabe T."/>
            <person name="Sugiyama A."/>
            <person name="Takemoto M."/>
            <person name="Kawakami B."/>
            <person name="Yamazaki M."/>
            <person name="Watanabe K."/>
            <person name="Kumagai A."/>
            <person name="Itakura S."/>
            <person name="Fukuzumi Y."/>
            <person name="Fujimori Y."/>
            <person name="Komiyama M."/>
            <person name="Tashiro H."/>
            <person name="Tanigami A."/>
            <person name="Fujiwara T."/>
            <person name="Ono T."/>
            <person name="Yamada K."/>
            <person name="Fujii Y."/>
            <person name="Ozaki K."/>
            <person name="Hirao M."/>
            <person name="Ohmori Y."/>
            <person name="Kawabata A."/>
            <person name="Hikiji T."/>
            <person name="Kobatake N."/>
            <person name="Inagaki H."/>
            <person name="Ikema Y."/>
            <person name="Okamoto S."/>
            <person name="Okitani R."/>
            <person name="Kawakami T."/>
            <person name="Noguchi S."/>
            <person name="Itoh T."/>
            <person name="Shigeta K."/>
            <person name="Senba T."/>
            <person name="Matsumura K."/>
            <person name="Nakajima Y."/>
            <person name="Mizuno T."/>
            <person name="Morinaga M."/>
            <person name="Sasaki M."/>
            <person name="Togashi T."/>
            <person name="Oyama M."/>
            <person name="Hata H."/>
            <person name="Watanabe M."/>
            <person name="Komatsu T."/>
            <person name="Mizushima-Sugano J."/>
            <person name="Satoh T."/>
            <person name="Shirai Y."/>
            <person name="Takahashi Y."/>
            <person name="Nakagawa K."/>
            <person name="Okumura K."/>
            <person name="Nagase T."/>
            <person name="Nomura N."/>
            <person name="Kikuchi H."/>
            <person name="Masuho Y."/>
            <person name="Yamashita R."/>
            <person name="Nakai K."/>
            <person name="Yada T."/>
            <person name="Nakamura Y."/>
            <person name="Ohara O."/>
            <person name="Isogai T."/>
            <person name="Sugano S."/>
        </authorList>
    </citation>
    <scope>NUCLEOTIDE SEQUENCE [LARGE SCALE MRNA] (ISOFORM 2)</scope>
    <source>
        <tissue>Thymus</tissue>
    </source>
</reference>
<reference key="2">
    <citation type="journal article" date="2007" name="BMC Genomics">
        <title>The full-ORF clone resource of the German cDNA consortium.</title>
        <authorList>
            <person name="Bechtel S."/>
            <person name="Rosenfelder H."/>
            <person name="Duda A."/>
            <person name="Schmidt C.P."/>
            <person name="Ernst U."/>
            <person name="Wellenreuther R."/>
            <person name="Mehrle A."/>
            <person name="Schuster C."/>
            <person name="Bahr A."/>
            <person name="Bloecker H."/>
            <person name="Heubner D."/>
            <person name="Hoerlein A."/>
            <person name="Michel G."/>
            <person name="Wedler H."/>
            <person name="Koehrer K."/>
            <person name="Ottenwaelder B."/>
            <person name="Poustka A."/>
            <person name="Wiemann S."/>
            <person name="Schupp I."/>
        </authorList>
    </citation>
    <scope>NUCLEOTIDE SEQUENCE [LARGE SCALE MRNA] (ISOFORM 1)</scope>
    <source>
        <tissue>Uterine endothelium</tissue>
    </source>
</reference>
<reference key="3">
    <citation type="journal article" date="2004" name="Nature">
        <title>The sequence and analysis of duplication-rich human chromosome 16.</title>
        <authorList>
            <person name="Martin J."/>
            <person name="Han C."/>
            <person name="Gordon L.A."/>
            <person name="Terry A."/>
            <person name="Prabhakar S."/>
            <person name="She X."/>
            <person name="Xie G."/>
            <person name="Hellsten U."/>
            <person name="Chan Y.M."/>
            <person name="Altherr M."/>
            <person name="Couronne O."/>
            <person name="Aerts A."/>
            <person name="Bajorek E."/>
            <person name="Black S."/>
            <person name="Blumer H."/>
            <person name="Branscomb E."/>
            <person name="Brown N.C."/>
            <person name="Bruno W.J."/>
            <person name="Buckingham J.M."/>
            <person name="Callen D.F."/>
            <person name="Campbell C.S."/>
            <person name="Campbell M.L."/>
            <person name="Campbell E.W."/>
            <person name="Caoile C."/>
            <person name="Challacombe J.F."/>
            <person name="Chasteen L.A."/>
            <person name="Chertkov O."/>
            <person name="Chi H.C."/>
            <person name="Christensen M."/>
            <person name="Clark L.M."/>
            <person name="Cohn J.D."/>
            <person name="Denys M."/>
            <person name="Detter J.C."/>
            <person name="Dickson M."/>
            <person name="Dimitrijevic-Bussod M."/>
            <person name="Escobar J."/>
            <person name="Fawcett J.J."/>
            <person name="Flowers D."/>
            <person name="Fotopulos D."/>
            <person name="Glavina T."/>
            <person name="Gomez M."/>
            <person name="Gonzales E."/>
            <person name="Goodstein D."/>
            <person name="Goodwin L.A."/>
            <person name="Grady D.L."/>
            <person name="Grigoriev I."/>
            <person name="Groza M."/>
            <person name="Hammon N."/>
            <person name="Hawkins T."/>
            <person name="Haydu L."/>
            <person name="Hildebrand C.E."/>
            <person name="Huang W."/>
            <person name="Israni S."/>
            <person name="Jett J."/>
            <person name="Jewett P.B."/>
            <person name="Kadner K."/>
            <person name="Kimball H."/>
            <person name="Kobayashi A."/>
            <person name="Krawczyk M.-C."/>
            <person name="Leyba T."/>
            <person name="Longmire J.L."/>
            <person name="Lopez F."/>
            <person name="Lou Y."/>
            <person name="Lowry S."/>
            <person name="Ludeman T."/>
            <person name="Manohar C.F."/>
            <person name="Mark G.A."/>
            <person name="McMurray K.L."/>
            <person name="Meincke L.J."/>
            <person name="Morgan J."/>
            <person name="Moyzis R.K."/>
            <person name="Mundt M.O."/>
            <person name="Munk A.C."/>
            <person name="Nandkeshwar R.D."/>
            <person name="Pitluck S."/>
            <person name="Pollard M."/>
            <person name="Predki P."/>
            <person name="Parson-Quintana B."/>
            <person name="Ramirez L."/>
            <person name="Rash S."/>
            <person name="Retterer J."/>
            <person name="Ricke D.O."/>
            <person name="Robinson D.L."/>
            <person name="Rodriguez A."/>
            <person name="Salamov A."/>
            <person name="Saunders E.H."/>
            <person name="Scott D."/>
            <person name="Shough T."/>
            <person name="Stallings R.L."/>
            <person name="Stalvey M."/>
            <person name="Sutherland R.D."/>
            <person name="Tapia R."/>
            <person name="Tesmer J.G."/>
            <person name="Thayer N."/>
            <person name="Thompson L.S."/>
            <person name="Tice H."/>
            <person name="Torney D.C."/>
            <person name="Tran-Gyamfi M."/>
            <person name="Tsai M."/>
            <person name="Ulanovsky L.E."/>
            <person name="Ustaszewska A."/>
            <person name="Vo N."/>
            <person name="White P.S."/>
            <person name="Williams A.L."/>
            <person name="Wills P.L."/>
            <person name="Wu J.-R."/>
            <person name="Wu K."/>
            <person name="Yang J."/>
            <person name="DeJong P."/>
            <person name="Bruce D."/>
            <person name="Doggett N.A."/>
            <person name="Deaven L."/>
            <person name="Schmutz J."/>
            <person name="Grimwood J."/>
            <person name="Richardson P."/>
            <person name="Rokhsar D.S."/>
            <person name="Eichler E.E."/>
            <person name="Gilna P."/>
            <person name="Lucas S.M."/>
            <person name="Myers R.M."/>
            <person name="Rubin E.M."/>
            <person name="Pennacchio L.A."/>
        </authorList>
    </citation>
    <scope>NUCLEOTIDE SEQUENCE [LARGE SCALE GENOMIC DNA]</scope>
</reference>
<reference key="4">
    <citation type="journal article" date="2004" name="Genome Res.">
        <title>The status, quality, and expansion of the NIH full-length cDNA project: the Mammalian Gene Collection (MGC).</title>
        <authorList>
            <consortium name="The MGC Project Team"/>
        </authorList>
    </citation>
    <scope>NUCLEOTIDE SEQUENCE [LARGE SCALE MRNA] (ISOFORM 1)</scope>
    <scope>VARIANT ASP-615</scope>
    <source>
        <tissue>Brain</tissue>
    </source>
</reference>
<reference key="5">
    <citation type="journal article" date="2008" name="Proc. Natl. Acad. Sci. U.S.A.">
        <title>A quantitative atlas of mitotic phosphorylation.</title>
        <authorList>
            <person name="Dephoure N."/>
            <person name="Zhou C."/>
            <person name="Villen J."/>
            <person name="Beausoleil S.A."/>
            <person name="Bakalarski C.E."/>
            <person name="Elledge S.J."/>
            <person name="Gygi S.P."/>
        </authorList>
    </citation>
    <scope>PHOSPHORYLATION [LARGE SCALE ANALYSIS] AT SER-591 AND SER-600</scope>
    <scope>IDENTIFICATION BY MASS SPECTROMETRY [LARGE SCALE ANALYSIS]</scope>
    <source>
        <tissue>Cervix carcinoma</tissue>
    </source>
</reference>
<reference key="6">
    <citation type="journal article" date="2017" name="Nat. Struct. Mol. Biol.">
        <title>Site-specific mapping of the human SUMO proteome reveals co-modification with phosphorylation.</title>
        <authorList>
            <person name="Hendriks I.A."/>
            <person name="Lyon D."/>
            <person name="Young C."/>
            <person name="Jensen L.J."/>
            <person name="Vertegaal A.C."/>
            <person name="Nielsen M.L."/>
        </authorList>
    </citation>
    <scope>SUMOYLATION [LARGE SCALE ANALYSIS] AT LYS-22; LYS-242; LYS-259; LYS-277; LYS-337; LYS-482; LYS-529; LYS-734; LYS-745 AND LYS-752</scope>
    <scope>IDENTIFICATION BY MASS SPECTROMETRY [LARGE SCALE ANALYSIS]</scope>
</reference>
<comment type="function">
    <text>May be involved in transcriptional regulation.</text>
</comment>
<comment type="subcellular location">
    <subcellularLocation>
        <location evidence="7">Nucleus</location>
    </subcellularLocation>
</comment>
<comment type="alternative products">
    <event type="alternative splicing"/>
    <isoform>
        <id>Q63HK3-1</id>
        <name>1</name>
        <sequence type="displayed"/>
    </isoform>
    <isoform>
        <id>Q63HK3-2</id>
        <name>2</name>
        <sequence type="described" ref="VSP_018189 VSP_018190"/>
    </isoform>
</comment>
<comment type="similarity">
    <text evidence="7">Belongs to the krueppel C2H2-type zinc-finger protein family.</text>
</comment>
<protein>
    <recommendedName>
        <fullName>Zinc finger protein with KRAB and SCAN domains 2</fullName>
    </recommendedName>
    <alternativeName>
        <fullName>Zinc finger protein 694</fullName>
    </alternativeName>
</protein>
<sequence length="967" mass="110941">MAVALDSQIDAPLEVEGCLIMKVEKDPEWASEPILEGSDSSETFRKCFRQFCYEDVTGPHEAFSKLWELCCRWLKPEMRSKEQILELLVIEQFLTILPEKIQAWAQKQCPQSGEEAVALVVHLEKETGRLRQQVSSPVHREKHSPLGAAWEVADFQPEQVETQPRAVSREEPGSLHSGHQEQLNRKRERRPLPKNARPSPWVPALADEWNTLDQEVTTTRLPAGSQEPVKDVHVARGFSYRKSVHQIPAQRDLYRDFRKENVGNVVSLGSAVSTSNKITRLEQRKEPWTLGLHSSNKRSILRSNYVKEKSVHAIQVPARSAGKTWREQQQWGLEDEKIAGVHWSYEETKTFLAILKESRFYETLQACPRNSQVYGAVAEWLRECGFLRTPEQCRTKFKSLQKSYRKVRNGHMLEPCAFFEDMDALLNPAARAPSTDKPKEMIPVPRLKRIAISAKEHISLVEEEEAAEDSDDDEIGIEFIRKSEIHGAPVLFQNLSGVHWGYEETKTFLDILRETRFYEALQACHRKSKLYGAVAEQLRECGFLRTPEQCRTKFKSLQKSYRKVKNGHVLESCAFYKEMDALINSRASAPSPSTPEEVPSPSRQERGGIEVEPQEPTGWEPEETSQEAVIEDSCSERMSEEEIVQEPEFQGPPGLLQSPNDFEIGSSIKEDPTQIVYKDMEQHRALIEKSKRVVSQSTDPSKYRKRECISGRQWENLQGIRQGKPMSQPRDLGKAVVHQRPFVGKRPYRLLKYGESFGRSTRLMCRMTHHKENPYKCGVCGKCFGRSRSLIRHQRIHTGEKPFKCLDCGKSFNDSSNFGAHQRIHTGEKPYRCGECGKCFSQSSSLIIHQRTHTGEKPYQCGECGKSFTNSSHFSAHRRVHTGENPYKCVDCEKSFNNCTRFREHRRIHTGEKPYGCAQCGKRFSKSSVLTKHREVHVREKPLPHPPSLYCPENPHKGKTDEFRKTF</sequence>
<name>ZKSC2_HUMAN</name>
<gene>
    <name type="primary">ZKSCAN2</name>
    <name type="synonym">ZNF694</name>
</gene>
<accession>Q63HK3</accession>
<accession>A1L3B4</accession>
<accession>Q6ZN77</accession>
<organism>
    <name type="scientific">Homo sapiens</name>
    <name type="common">Human</name>
    <dbReference type="NCBI Taxonomy" id="9606"/>
    <lineage>
        <taxon>Eukaryota</taxon>
        <taxon>Metazoa</taxon>
        <taxon>Chordata</taxon>
        <taxon>Craniata</taxon>
        <taxon>Vertebrata</taxon>
        <taxon>Euteleostomi</taxon>
        <taxon>Mammalia</taxon>
        <taxon>Eutheria</taxon>
        <taxon>Euarchontoglires</taxon>
        <taxon>Primates</taxon>
        <taxon>Haplorrhini</taxon>
        <taxon>Catarrhini</taxon>
        <taxon>Hominidae</taxon>
        <taxon>Homo</taxon>
    </lineage>
</organism>